<dbReference type="EC" id="2.7.7.8" evidence="1"/>
<dbReference type="EMBL" id="BA000031">
    <property type="protein sequence ID" value="BAC60715.1"/>
    <property type="molecule type" value="Genomic_DNA"/>
</dbReference>
<dbReference type="RefSeq" id="NP_798831.1">
    <property type="nucleotide sequence ID" value="NC_004603.1"/>
</dbReference>
<dbReference type="RefSeq" id="WP_005456067.1">
    <property type="nucleotide sequence ID" value="NC_004603.1"/>
</dbReference>
<dbReference type="SMR" id="Q87M06"/>
<dbReference type="GeneID" id="1189965"/>
<dbReference type="KEGG" id="vpa:VP2452"/>
<dbReference type="PATRIC" id="fig|223926.6.peg.2353"/>
<dbReference type="eggNOG" id="COG1185">
    <property type="taxonomic scope" value="Bacteria"/>
</dbReference>
<dbReference type="HOGENOM" id="CLU_004217_2_2_6"/>
<dbReference type="Proteomes" id="UP000002493">
    <property type="component" value="Chromosome 1"/>
</dbReference>
<dbReference type="GO" id="GO:0005829">
    <property type="term" value="C:cytosol"/>
    <property type="evidence" value="ECO:0007669"/>
    <property type="project" value="TreeGrafter"/>
</dbReference>
<dbReference type="GO" id="GO:0000175">
    <property type="term" value="F:3'-5'-RNA exonuclease activity"/>
    <property type="evidence" value="ECO:0007669"/>
    <property type="project" value="TreeGrafter"/>
</dbReference>
<dbReference type="GO" id="GO:0000287">
    <property type="term" value="F:magnesium ion binding"/>
    <property type="evidence" value="ECO:0007669"/>
    <property type="project" value="UniProtKB-UniRule"/>
</dbReference>
<dbReference type="GO" id="GO:0004654">
    <property type="term" value="F:polyribonucleotide nucleotidyltransferase activity"/>
    <property type="evidence" value="ECO:0007669"/>
    <property type="project" value="UniProtKB-UniRule"/>
</dbReference>
<dbReference type="GO" id="GO:0003723">
    <property type="term" value="F:RNA binding"/>
    <property type="evidence" value="ECO:0007669"/>
    <property type="project" value="UniProtKB-UniRule"/>
</dbReference>
<dbReference type="GO" id="GO:0006402">
    <property type="term" value="P:mRNA catabolic process"/>
    <property type="evidence" value="ECO:0007669"/>
    <property type="project" value="UniProtKB-UniRule"/>
</dbReference>
<dbReference type="GO" id="GO:0006396">
    <property type="term" value="P:RNA processing"/>
    <property type="evidence" value="ECO:0007669"/>
    <property type="project" value="InterPro"/>
</dbReference>
<dbReference type="CDD" id="cd02393">
    <property type="entry name" value="KH-I_PNPase"/>
    <property type="match status" value="1"/>
</dbReference>
<dbReference type="CDD" id="cd11363">
    <property type="entry name" value="RNase_PH_PNPase_1"/>
    <property type="match status" value="1"/>
</dbReference>
<dbReference type="CDD" id="cd11364">
    <property type="entry name" value="RNase_PH_PNPase_2"/>
    <property type="match status" value="1"/>
</dbReference>
<dbReference type="CDD" id="cd04472">
    <property type="entry name" value="S1_PNPase"/>
    <property type="match status" value="1"/>
</dbReference>
<dbReference type="FunFam" id="2.40.50.140:FF:000023">
    <property type="entry name" value="Polyribonucleotide nucleotidyltransferase"/>
    <property type="match status" value="1"/>
</dbReference>
<dbReference type="FunFam" id="3.30.1370.10:FF:000001">
    <property type="entry name" value="Polyribonucleotide nucleotidyltransferase"/>
    <property type="match status" value="1"/>
</dbReference>
<dbReference type="FunFam" id="3.30.230.70:FF:000001">
    <property type="entry name" value="Polyribonucleotide nucleotidyltransferase"/>
    <property type="match status" value="1"/>
</dbReference>
<dbReference type="FunFam" id="3.30.230.70:FF:000002">
    <property type="entry name" value="Polyribonucleotide nucleotidyltransferase"/>
    <property type="match status" value="1"/>
</dbReference>
<dbReference type="Gene3D" id="3.30.230.70">
    <property type="entry name" value="GHMP Kinase, N-terminal domain"/>
    <property type="match status" value="2"/>
</dbReference>
<dbReference type="Gene3D" id="3.30.1370.10">
    <property type="entry name" value="K Homology domain, type 1"/>
    <property type="match status" value="1"/>
</dbReference>
<dbReference type="Gene3D" id="2.40.50.140">
    <property type="entry name" value="Nucleic acid-binding proteins"/>
    <property type="match status" value="1"/>
</dbReference>
<dbReference type="HAMAP" id="MF_01595">
    <property type="entry name" value="PNPase"/>
    <property type="match status" value="1"/>
</dbReference>
<dbReference type="InterPro" id="IPR001247">
    <property type="entry name" value="ExoRNase_PH_dom1"/>
</dbReference>
<dbReference type="InterPro" id="IPR015847">
    <property type="entry name" value="ExoRNase_PH_dom2"/>
</dbReference>
<dbReference type="InterPro" id="IPR036345">
    <property type="entry name" value="ExoRNase_PH_dom2_sf"/>
</dbReference>
<dbReference type="InterPro" id="IPR004087">
    <property type="entry name" value="KH_dom"/>
</dbReference>
<dbReference type="InterPro" id="IPR004088">
    <property type="entry name" value="KH_dom_type_1"/>
</dbReference>
<dbReference type="InterPro" id="IPR036612">
    <property type="entry name" value="KH_dom_type_1_sf"/>
</dbReference>
<dbReference type="InterPro" id="IPR012340">
    <property type="entry name" value="NA-bd_OB-fold"/>
</dbReference>
<dbReference type="InterPro" id="IPR012162">
    <property type="entry name" value="PNPase"/>
</dbReference>
<dbReference type="InterPro" id="IPR027408">
    <property type="entry name" value="PNPase/RNase_PH_dom_sf"/>
</dbReference>
<dbReference type="InterPro" id="IPR015848">
    <property type="entry name" value="PNPase_PH_RNA-bd_bac/org-type"/>
</dbReference>
<dbReference type="InterPro" id="IPR020568">
    <property type="entry name" value="Ribosomal_Su5_D2-typ_SF"/>
</dbReference>
<dbReference type="InterPro" id="IPR003029">
    <property type="entry name" value="S1_domain"/>
</dbReference>
<dbReference type="NCBIfam" id="TIGR03591">
    <property type="entry name" value="polynuc_phos"/>
    <property type="match status" value="1"/>
</dbReference>
<dbReference type="NCBIfam" id="NF008805">
    <property type="entry name" value="PRK11824.1"/>
    <property type="match status" value="1"/>
</dbReference>
<dbReference type="PANTHER" id="PTHR11252">
    <property type="entry name" value="POLYRIBONUCLEOTIDE NUCLEOTIDYLTRANSFERASE"/>
    <property type="match status" value="1"/>
</dbReference>
<dbReference type="PANTHER" id="PTHR11252:SF0">
    <property type="entry name" value="POLYRIBONUCLEOTIDE NUCLEOTIDYLTRANSFERASE 1, MITOCHONDRIAL"/>
    <property type="match status" value="1"/>
</dbReference>
<dbReference type="Pfam" id="PF00013">
    <property type="entry name" value="KH_1"/>
    <property type="match status" value="1"/>
</dbReference>
<dbReference type="Pfam" id="PF03726">
    <property type="entry name" value="PNPase"/>
    <property type="match status" value="1"/>
</dbReference>
<dbReference type="Pfam" id="PF01138">
    <property type="entry name" value="RNase_PH"/>
    <property type="match status" value="2"/>
</dbReference>
<dbReference type="Pfam" id="PF03725">
    <property type="entry name" value="RNase_PH_C"/>
    <property type="match status" value="2"/>
</dbReference>
<dbReference type="Pfam" id="PF00575">
    <property type="entry name" value="S1"/>
    <property type="match status" value="1"/>
</dbReference>
<dbReference type="PIRSF" id="PIRSF005499">
    <property type="entry name" value="PNPase"/>
    <property type="match status" value="1"/>
</dbReference>
<dbReference type="SMART" id="SM00322">
    <property type="entry name" value="KH"/>
    <property type="match status" value="1"/>
</dbReference>
<dbReference type="SMART" id="SM00316">
    <property type="entry name" value="S1"/>
    <property type="match status" value="1"/>
</dbReference>
<dbReference type="SUPFAM" id="SSF54791">
    <property type="entry name" value="Eukaryotic type KH-domain (KH-domain type I)"/>
    <property type="match status" value="1"/>
</dbReference>
<dbReference type="SUPFAM" id="SSF50249">
    <property type="entry name" value="Nucleic acid-binding proteins"/>
    <property type="match status" value="1"/>
</dbReference>
<dbReference type="SUPFAM" id="SSF55666">
    <property type="entry name" value="Ribonuclease PH domain 2-like"/>
    <property type="match status" value="2"/>
</dbReference>
<dbReference type="SUPFAM" id="SSF54211">
    <property type="entry name" value="Ribosomal protein S5 domain 2-like"/>
    <property type="match status" value="2"/>
</dbReference>
<dbReference type="PROSITE" id="PS50084">
    <property type="entry name" value="KH_TYPE_1"/>
    <property type="match status" value="1"/>
</dbReference>
<dbReference type="PROSITE" id="PS50126">
    <property type="entry name" value="S1"/>
    <property type="match status" value="1"/>
</dbReference>
<feature type="chain" id="PRO_0000329931" description="Polyribonucleotide nucleotidyltransferase">
    <location>
        <begin position="1"/>
        <end position="711"/>
    </location>
</feature>
<feature type="domain" description="KH" evidence="1">
    <location>
        <begin position="554"/>
        <end position="613"/>
    </location>
</feature>
<feature type="domain" description="S1 motif" evidence="1">
    <location>
        <begin position="623"/>
        <end position="691"/>
    </location>
</feature>
<feature type="region of interest" description="Disordered" evidence="2">
    <location>
        <begin position="691"/>
        <end position="711"/>
    </location>
</feature>
<feature type="binding site" evidence="1">
    <location>
        <position position="487"/>
    </location>
    <ligand>
        <name>Mg(2+)</name>
        <dbReference type="ChEBI" id="CHEBI:18420"/>
    </ligand>
</feature>
<feature type="binding site" evidence="1">
    <location>
        <position position="493"/>
    </location>
    <ligand>
        <name>Mg(2+)</name>
        <dbReference type="ChEBI" id="CHEBI:18420"/>
    </ligand>
</feature>
<sequence length="711" mass="76738">MFEKPVVKTFQYGNHTVTLETGVIARQATAAVMVTMDDTAVFVSVVGKKEAVAGQDFFPLTVNYQERTYAAGKIPGGFFKREGRPSEGETLTARLIDRPIRPLFPDAFKNEVQVIATVVSVNPDVQPDIPTMIGTSAALAISGIPFNGPIGAARVGHIDGQLVLNPSQTELNASRLDLVVAGTESAVLMVESEADNLTEEEMLAAVVFGHDQQQVVINAINEFKAEVATPAWDWVAPEENTALKTKIAELAEAKLVEAYQITEKMARYDRIHEIAAEVNEALLAQDPEADTKEIHTIFHDLEKTVVRRSIIAGNPRIDGREKDMVRALDVRTGVLPRTHGSALFTRGETQALVTATLGTQRDAQIIDELTGERKDHFLLHYNFPPYCVGETGFVGSPKRREIGHGKLAKRGIAAVMPSVDEFPYTVRVVSEITESNGSSSMASVCGTSLALMDAGVPIKASVAGIAMGLVKEGDDFVVLSDILGDEDHLGDMDFKVAGTSTGVTALQMDIKIEGITKEIMQIALNQAQGARKHILSVMDEALAGARDDISEFAPRIHTMKISAEKIKDVIGKGGAVIRALTEETGTTIEIEDDGTIKIAATEGAAAKEAIRRIEEITAEVEVGRIYTGKVARLADFGAFVTVLPGKDGLVHISQIAEKRVEKVSDYLTEGQEVQVKVLEIDRQGRVRLSMKEAVEKPAEEAAAEAPAAKEE</sequence>
<accession>Q87M06</accession>
<keyword id="KW-0963">Cytoplasm</keyword>
<keyword id="KW-0460">Magnesium</keyword>
<keyword id="KW-0479">Metal-binding</keyword>
<keyword id="KW-0548">Nucleotidyltransferase</keyword>
<keyword id="KW-0694">RNA-binding</keyword>
<keyword id="KW-0808">Transferase</keyword>
<organism>
    <name type="scientific">Vibrio parahaemolyticus serotype O3:K6 (strain RIMD 2210633)</name>
    <dbReference type="NCBI Taxonomy" id="223926"/>
    <lineage>
        <taxon>Bacteria</taxon>
        <taxon>Pseudomonadati</taxon>
        <taxon>Pseudomonadota</taxon>
        <taxon>Gammaproteobacteria</taxon>
        <taxon>Vibrionales</taxon>
        <taxon>Vibrionaceae</taxon>
        <taxon>Vibrio</taxon>
    </lineage>
</organism>
<reference key="1">
    <citation type="journal article" date="2003" name="Lancet">
        <title>Genome sequence of Vibrio parahaemolyticus: a pathogenic mechanism distinct from that of V. cholerae.</title>
        <authorList>
            <person name="Makino K."/>
            <person name="Oshima K."/>
            <person name="Kurokawa K."/>
            <person name="Yokoyama K."/>
            <person name="Uda T."/>
            <person name="Tagomori K."/>
            <person name="Iijima Y."/>
            <person name="Najima M."/>
            <person name="Nakano M."/>
            <person name="Yamashita A."/>
            <person name="Kubota Y."/>
            <person name="Kimura S."/>
            <person name="Yasunaga T."/>
            <person name="Honda T."/>
            <person name="Shinagawa H."/>
            <person name="Hattori M."/>
            <person name="Iida T."/>
        </authorList>
    </citation>
    <scope>NUCLEOTIDE SEQUENCE [LARGE SCALE GENOMIC DNA]</scope>
    <source>
        <strain>RIMD 2210633</strain>
    </source>
</reference>
<evidence type="ECO:0000255" key="1">
    <source>
        <dbReference type="HAMAP-Rule" id="MF_01595"/>
    </source>
</evidence>
<evidence type="ECO:0000256" key="2">
    <source>
        <dbReference type="SAM" id="MobiDB-lite"/>
    </source>
</evidence>
<comment type="function">
    <text evidence="1">Involved in mRNA degradation. Catalyzes the phosphorolysis of single-stranded polyribonucleotides processively in the 3'- to 5'-direction.</text>
</comment>
<comment type="catalytic activity">
    <reaction evidence="1">
        <text>RNA(n+1) + phosphate = RNA(n) + a ribonucleoside 5'-diphosphate</text>
        <dbReference type="Rhea" id="RHEA:22096"/>
        <dbReference type="Rhea" id="RHEA-COMP:14527"/>
        <dbReference type="Rhea" id="RHEA-COMP:17342"/>
        <dbReference type="ChEBI" id="CHEBI:43474"/>
        <dbReference type="ChEBI" id="CHEBI:57930"/>
        <dbReference type="ChEBI" id="CHEBI:140395"/>
        <dbReference type="EC" id="2.7.7.8"/>
    </reaction>
</comment>
<comment type="cofactor">
    <cofactor evidence="1">
        <name>Mg(2+)</name>
        <dbReference type="ChEBI" id="CHEBI:18420"/>
    </cofactor>
</comment>
<comment type="subunit">
    <text evidence="1">Component of the RNA degradosome, which is a multiprotein complex involved in RNA processing and mRNA degradation.</text>
</comment>
<comment type="subcellular location">
    <subcellularLocation>
        <location evidence="1">Cytoplasm</location>
    </subcellularLocation>
</comment>
<comment type="similarity">
    <text evidence="1">Belongs to the polyribonucleotide nucleotidyltransferase family.</text>
</comment>
<gene>
    <name evidence="1" type="primary">pnp</name>
    <name type="ordered locus">VP2452</name>
</gene>
<protein>
    <recommendedName>
        <fullName evidence="1">Polyribonucleotide nucleotidyltransferase</fullName>
        <ecNumber evidence="1">2.7.7.8</ecNumber>
    </recommendedName>
    <alternativeName>
        <fullName evidence="1">Polynucleotide phosphorylase</fullName>
        <shortName evidence="1">PNPase</shortName>
    </alternativeName>
</protein>
<name>PNP_VIBPA</name>
<proteinExistence type="inferred from homology"/>